<name>BAP3_YEAST</name>
<proteinExistence type="evidence at protein level"/>
<comment type="function">
    <text evidence="3 4">Involved in transport of isoleucine, leucine, valine, cysteine, methionine, phenylalanine, tyrosine and tryptophan.</text>
</comment>
<comment type="subcellular location">
    <subcellularLocation>
        <location>Membrane</location>
        <topology>Multi-pass membrane protein</topology>
    </subcellularLocation>
</comment>
<comment type="similarity">
    <text evidence="5">Belongs to the amino acid-polyamine-organocation (APC) superfamily. YAT (TC 2.A.3.10) family.</text>
</comment>
<accession>P41815</accession>
<accession>D6VS34</accession>
<gene>
    <name type="primary">BAP3</name>
    <name type="synonym">PAP1</name>
    <name type="ordered locus">YDR046C</name>
    <name type="ORF">YD9609.02C</name>
</gene>
<protein>
    <recommendedName>
        <fullName>Valine amino-acid permease</fullName>
    </recommendedName>
    <alternativeName>
        <fullName>Branched-chain amino-acid permease 3</fullName>
    </alternativeName>
</protein>
<feature type="chain" id="PRO_0000054147" description="Valine amino-acid permease">
    <location>
        <begin position="1"/>
        <end position="604"/>
    </location>
</feature>
<feature type="topological domain" description="Cytoplasmic" evidence="2">
    <location>
        <begin position="1"/>
        <end position="95"/>
    </location>
</feature>
<feature type="transmembrane region" description="Helical" evidence="2">
    <location>
        <begin position="96"/>
        <end position="116"/>
    </location>
</feature>
<feature type="topological domain" description="Extracellular" evidence="2">
    <location>
        <begin position="117"/>
        <end position="119"/>
    </location>
</feature>
<feature type="transmembrane region" description="Helical" evidence="2">
    <location>
        <begin position="120"/>
        <end position="140"/>
    </location>
</feature>
<feature type="topological domain" description="Cytoplasmic" evidence="2">
    <location>
        <begin position="141"/>
        <end position="169"/>
    </location>
</feature>
<feature type="transmembrane region" description="Helical" evidence="2">
    <location>
        <begin position="170"/>
        <end position="190"/>
    </location>
</feature>
<feature type="topological domain" description="Extracellular" evidence="2">
    <location>
        <begin position="191"/>
        <end position="206"/>
    </location>
</feature>
<feature type="transmembrane region" description="Helical" evidence="2">
    <location>
        <begin position="207"/>
        <end position="227"/>
    </location>
</feature>
<feature type="topological domain" description="Cytoplasmic" evidence="2">
    <location>
        <begin position="228"/>
        <end position="238"/>
    </location>
</feature>
<feature type="transmembrane region" description="Helical" evidence="2">
    <location>
        <begin position="239"/>
        <end position="259"/>
    </location>
</feature>
<feature type="topological domain" description="Extracellular" evidence="2">
    <location>
        <begin position="260"/>
        <end position="284"/>
    </location>
</feature>
<feature type="transmembrane region" description="Helical" evidence="2">
    <location>
        <begin position="285"/>
        <end position="305"/>
    </location>
</feature>
<feature type="topological domain" description="Cytoplasmic" evidence="2">
    <location>
        <begin position="306"/>
        <end position="323"/>
    </location>
</feature>
<feature type="transmembrane region" description="Helical" evidence="2">
    <location>
        <begin position="324"/>
        <end position="344"/>
    </location>
</feature>
<feature type="topological domain" description="Extracellular" evidence="2">
    <location>
        <begin position="345"/>
        <end position="377"/>
    </location>
</feature>
<feature type="transmembrane region" description="Helical" evidence="2">
    <location>
        <begin position="378"/>
        <end position="398"/>
    </location>
</feature>
<feature type="topological domain" description="Cytoplasmic" evidence="2">
    <location>
        <begin position="399"/>
        <end position="423"/>
    </location>
</feature>
<feature type="transmembrane region" description="Helical" evidence="2">
    <location>
        <begin position="424"/>
        <end position="444"/>
    </location>
</feature>
<feature type="topological domain" description="Extracellular" evidence="2">
    <location>
        <begin position="445"/>
        <end position="449"/>
    </location>
</feature>
<feature type="transmembrane region" description="Helical" evidence="2">
    <location>
        <begin position="450"/>
        <end position="470"/>
    </location>
</feature>
<feature type="topological domain" description="Cytoplasmic" evidence="2">
    <location>
        <begin position="471"/>
        <end position="502"/>
    </location>
</feature>
<feature type="transmembrane region" description="Helical" evidence="2">
    <location>
        <begin position="503"/>
        <end position="523"/>
    </location>
</feature>
<feature type="topological domain" description="Extracellular" evidence="2">
    <location>
        <begin position="524"/>
        <end position="531"/>
    </location>
</feature>
<feature type="transmembrane region" description="Helical" evidence="2">
    <location>
        <begin position="532"/>
        <end position="552"/>
    </location>
</feature>
<feature type="topological domain" description="Cytoplasmic" evidence="2">
    <location>
        <begin position="553"/>
        <end position="604"/>
    </location>
</feature>
<feature type="modified residue" description="Phosphoserine" evidence="1">
    <location>
        <position position="14"/>
    </location>
</feature>
<feature type="modified residue" description="Phosphoserine" evidence="1">
    <location>
        <position position="79"/>
    </location>
</feature>
<feature type="sequence conflict" description="In Ref. 1; CAA52970." evidence="5" ref="1">
    <original>VYD</original>
    <variation>GLR</variation>
    <location>
        <begin position="573"/>
        <end position="575"/>
    </location>
</feature>
<organism>
    <name type="scientific">Saccharomyces cerevisiae (strain ATCC 204508 / S288c)</name>
    <name type="common">Baker's yeast</name>
    <dbReference type="NCBI Taxonomy" id="559292"/>
    <lineage>
        <taxon>Eukaryota</taxon>
        <taxon>Fungi</taxon>
        <taxon>Dikarya</taxon>
        <taxon>Ascomycota</taxon>
        <taxon>Saccharomycotina</taxon>
        <taxon>Saccharomycetes</taxon>
        <taxon>Saccharomycetales</taxon>
        <taxon>Saccharomycetaceae</taxon>
        <taxon>Saccharomyces</taxon>
    </lineage>
</organism>
<dbReference type="EMBL" id="X75076">
    <property type="protein sequence ID" value="CAA52970.1"/>
    <property type="molecule type" value="Genomic_DNA"/>
</dbReference>
<dbReference type="EMBL" id="Z49209">
    <property type="protein sequence ID" value="CAA89077.1"/>
    <property type="molecule type" value="Genomic_DNA"/>
</dbReference>
<dbReference type="EMBL" id="BK006938">
    <property type="protein sequence ID" value="DAA11894.1"/>
    <property type="molecule type" value="Genomic_DNA"/>
</dbReference>
<dbReference type="PIR" id="S54032">
    <property type="entry name" value="S54032"/>
</dbReference>
<dbReference type="RefSeq" id="NP_010331.3">
    <property type="nucleotide sequence ID" value="NM_001180354.3"/>
</dbReference>
<dbReference type="SMR" id="P41815"/>
<dbReference type="BioGRID" id="32101">
    <property type="interactions" value="171"/>
</dbReference>
<dbReference type="DIP" id="DIP-7900N"/>
<dbReference type="FunCoup" id="P41815">
    <property type="interactions" value="258"/>
</dbReference>
<dbReference type="IntAct" id="P41815">
    <property type="interactions" value="12"/>
</dbReference>
<dbReference type="MINT" id="P41815"/>
<dbReference type="STRING" id="4932.YDR046C"/>
<dbReference type="TCDB" id="2.A.3.10.27">
    <property type="family name" value="the amino acid-polyamine-organocation (apc) family"/>
</dbReference>
<dbReference type="iPTMnet" id="P41815"/>
<dbReference type="PaxDb" id="4932-YDR046C"/>
<dbReference type="PeptideAtlas" id="P41815"/>
<dbReference type="EnsemblFungi" id="YDR046C_mRNA">
    <property type="protein sequence ID" value="YDR046C"/>
    <property type="gene ID" value="YDR046C"/>
</dbReference>
<dbReference type="GeneID" id="851616"/>
<dbReference type="KEGG" id="sce:YDR046C"/>
<dbReference type="AGR" id="SGD:S000002453"/>
<dbReference type="SGD" id="S000002453">
    <property type="gene designation" value="BAP3"/>
</dbReference>
<dbReference type="VEuPathDB" id="FungiDB:YDR046C"/>
<dbReference type="eggNOG" id="KOG1286">
    <property type="taxonomic scope" value="Eukaryota"/>
</dbReference>
<dbReference type="GeneTree" id="ENSGT00940000176401"/>
<dbReference type="HOGENOM" id="CLU_007946_12_0_1"/>
<dbReference type="InParanoid" id="P41815"/>
<dbReference type="OMA" id="QAFTWLA"/>
<dbReference type="OrthoDB" id="3900342at2759"/>
<dbReference type="BioCyc" id="YEAST:G3O-29659-MONOMER"/>
<dbReference type="BioGRID-ORCS" id="851616">
    <property type="hits" value="7 hits in 10 CRISPR screens"/>
</dbReference>
<dbReference type="PRO" id="PR:P41815"/>
<dbReference type="Proteomes" id="UP000002311">
    <property type="component" value="Chromosome IV"/>
</dbReference>
<dbReference type="RNAct" id="P41815">
    <property type="molecule type" value="protein"/>
</dbReference>
<dbReference type="GO" id="GO:0005783">
    <property type="term" value="C:endoplasmic reticulum"/>
    <property type="evidence" value="ECO:0007005"/>
    <property type="project" value="SGD"/>
</dbReference>
<dbReference type="GO" id="GO:0016020">
    <property type="term" value="C:membrane"/>
    <property type="evidence" value="ECO:0000318"/>
    <property type="project" value="GO_Central"/>
</dbReference>
<dbReference type="GO" id="GO:0005739">
    <property type="term" value="C:mitochondrion"/>
    <property type="evidence" value="ECO:0007005"/>
    <property type="project" value="SGD"/>
</dbReference>
<dbReference type="GO" id="GO:0015171">
    <property type="term" value="F:amino acid transmembrane transporter activity"/>
    <property type="evidence" value="ECO:0000314"/>
    <property type="project" value="SGD"/>
</dbReference>
<dbReference type="GO" id="GO:0003333">
    <property type="term" value="P:amino acid transmembrane transport"/>
    <property type="evidence" value="ECO:0000318"/>
    <property type="project" value="GO_Central"/>
</dbReference>
<dbReference type="GO" id="GO:0006865">
    <property type="term" value="P:amino acid transport"/>
    <property type="evidence" value="ECO:0000314"/>
    <property type="project" value="SGD"/>
</dbReference>
<dbReference type="GO" id="GO:0055085">
    <property type="term" value="P:transmembrane transport"/>
    <property type="evidence" value="ECO:0000314"/>
    <property type="project" value="SGD"/>
</dbReference>
<dbReference type="FunFam" id="1.20.1740.10:FF:000017">
    <property type="entry name" value="Amino acid permease"/>
    <property type="match status" value="1"/>
</dbReference>
<dbReference type="Gene3D" id="1.20.1740.10">
    <property type="entry name" value="Amino acid/polyamine transporter I"/>
    <property type="match status" value="1"/>
</dbReference>
<dbReference type="InterPro" id="IPR004841">
    <property type="entry name" value="AA-permease/SLC12A_dom"/>
</dbReference>
<dbReference type="InterPro" id="IPR004840">
    <property type="entry name" value="Amino_acid_permease_CS"/>
</dbReference>
<dbReference type="InterPro" id="IPR004762">
    <property type="entry name" value="Amino_acid_permease_fungi"/>
</dbReference>
<dbReference type="InterPro" id="IPR050524">
    <property type="entry name" value="APC_YAT"/>
</dbReference>
<dbReference type="NCBIfam" id="TIGR00913">
    <property type="entry name" value="2A0310"/>
    <property type="match status" value="1"/>
</dbReference>
<dbReference type="PANTHER" id="PTHR43341">
    <property type="entry name" value="AMINO ACID PERMEASE"/>
    <property type="match status" value="1"/>
</dbReference>
<dbReference type="PANTHER" id="PTHR43341:SF7">
    <property type="entry name" value="LEU_VAL_ILE AMINO-ACID PERMEASE-RELATED"/>
    <property type="match status" value="1"/>
</dbReference>
<dbReference type="Pfam" id="PF00324">
    <property type="entry name" value="AA_permease"/>
    <property type="match status" value="1"/>
</dbReference>
<dbReference type="PIRSF" id="PIRSF006060">
    <property type="entry name" value="AA_transporter"/>
    <property type="match status" value="1"/>
</dbReference>
<dbReference type="PROSITE" id="PS00218">
    <property type="entry name" value="AMINO_ACID_PERMEASE_1"/>
    <property type="match status" value="1"/>
</dbReference>
<sequence length="604" mass="67365">MSDPIVTSSKMEKSAEFEVTDSALYNNFNTSTTASLTPEIKEHSEESRNGLVHRFVDSFRRAESQRLEEDNDLEDGTKSMKSNNHLKKSMKSRHVVMMSLGTGIGTGLLVANAKGLSLAGPGSLVIGYVMVSFVTYFMVQAAGEMGVTYPTLPGNFNAYNSIFISKSFGFATTWLFCIQWLTVLPLELITSSMTVKYWNDTINADVFIVIFYVFLLFIHFFGVKAYGETEFIFNSCKILMVAGFIILSVVINCGGAGVDGYIGGKYWRDPGSFAEGSGATRFKGICYILVSAYFSFGGIELFVLSINEQSNPRKSTPVAAKRSVYRILIIYLLTMILIGFNVPHNNDQLMGSGGSATHASPYVLAASIHKVRVIPHIINAVILISVISVANSALYAAPRLMCSLAQQGYAPKFLNYIDREGRPLRALVVCSLVGVVGFVACSPQEEQAFTWLAAIAGLSELFTWSGIMLSHIRFRKAMKVQGRSLDEVGYKANTGIWGSYYGVFFNMLVFMAQFWVALSPIGNGGKCDAQAFFESYLAAPLWIFMYVGYMVYKRDFTFLNPLDKIDLDFHRRVYDPEIMRQEDEENKERLKNSSIFVRVYKFWC</sequence>
<evidence type="ECO:0000250" key="1">
    <source>
        <dbReference type="UniProtKB" id="P38084"/>
    </source>
</evidence>
<evidence type="ECO:0000255" key="2"/>
<evidence type="ECO:0000269" key="3">
    <source>
    </source>
</evidence>
<evidence type="ECO:0000269" key="4">
    <source>
    </source>
</evidence>
<evidence type="ECO:0000305" key="5"/>
<reference key="1">
    <citation type="journal article" date="1994" name="Gene">
        <title>Cloning and chromosomal organization of a gene encoding a putative amino-acid permease from Saccharomyces cerevisiae.</title>
        <authorList>
            <person name="Mai B."/>
            <person name="Lipp M."/>
        </authorList>
    </citation>
    <scope>NUCLEOTIDE SEQUENCE [GENOMIC DNA] OF 11-575</scope>
</reference>
<reference key="2">
    <citation type="journal article" date="1997" name="Nature">
        <title>The nucleotide sequence of Saccharomyces cerevisiae chromosome IV.</title>
        <authorList>
            <person name="Jacq C."/>
            <person name="Alt-Moerbe J."/>
            <person name="Andre B."/>
            <person name="Arnold W."/>
            <person name="Bahr A."/>
            <person name="Ballesta J.P.G."/>
            <person name="Bargues M."/>
            <person name="Baron L."/>
            <person name="Becker A."/>
            <person name="Biteau N."/>
            <person name="Bloecker H."/>
            <person name="Blugeon C."/>
            <person name="Boskovic J."/>
            <person name="Brandt P."/>
            <person name="Brueckner M."/>
            <person name="Buitrago M.J."/>
            <person name="Coster F."/>
            <person name="Delaveau T."/>
            <person name="del Rey F."/>
            <person name="Dujon B."/>
            <person name="Eide L.G."/>
            <person name="Garcia-Cantalejo J.M."/>
            <person name="Goffeau A."/>
            <person name="Gomez-Peris A."/>
            <person name="Granotier C."/>
            <person name="Hanemann V."/>
            <person name="Hankeln T."/>
            <person name="Hoheisel J.D."/>
            <person name="Jaeger W."/>
            <person name="Jimenez A."/>
            <person name="Jonniaux J.-L."/>
            <person name="Kraemer C."/>
            <person name="Kuester H."/>
            <person name="Laamanen P."/>
            <person name="Legros Y."/>
            <person name="Louis E.J."/>
            <person name="Moeller-Rieker S."/>
            <person name="Monnet A."/>
            <person name="Moro M."/>
            <person name="Mueller-Auer S."/>
            <person name="Nussbaumer B."/>
            <person name="Paricio N."/>
            <person name="Paulin L."/>
            <person name="Perea J."/>
            <person name="Perez-Alonso M."/>
            <person name="Perez-Ortin J.E."/>
            <person name="Pohl T.M."/>
            <person name="Prydz H."/>
            <person name="Purnelle B."/>
            <person name="Rasmussen S.W."/>
            <person name="Remacha M.A."/>
            <person name="Revuelta J.L."/>
            <person name="Rieger M."/>
            <person name="Salom D."/>
            <person name="Saluz H.P."/>
            <person name="Saiz J.E."/>
            <person name="Saren A.-M."/>
            <person name="Schaefer M."/>
            <person name="Scharfe M."/>
            <person name="Schmidt E.R."/>
            <person name="Schneider C."/>
            <person name="Scholler P."/>
            <person name="Schwarz S."/>
            <person name="Soler-Mira A."/>
            <person name="Urrestarazu L.A."/>
            <person name="Verhasselt P."/>
            <person name="Vissers S."/>
            <person name="Voet M."/>
            <person name="Volckaert G."/>
            <person name="Wagner G."/>
            <person name="Wambutt R."/>
            <person name="Wedler E."/>
            <person name="Wedler H."/>
            <person name="Woelfl S."/>
            <person name="Harris D.E."/>
            <person name="Bowman S."/>
            <person name="Brown D."/>
            <person name="Churcher C.M."/>
            <person name="Connor R."/>
            <person name="Dedman K."/>
            <person name="Gentles S."/>
            <person name="Hamlin N."/>
            <person name="Hunt S."/>
            <person name="Jones L."/>
            <person name="McDonald S."/>
            <person name="Murphy L.D."/>
            <person name="Niblett D."/>
            <person name="Odell C."/>
            <person name="Oliver K."/>
            <person name="Rajandream M.A."/>
            <person name="Richards C."/>
            <person name="Shore L."/>
            <person name="Walsh S.V."/>
            <person name="Barrell B.G."/>
            <person name="Dietrich F.S."/>
            <person name="Mulligan J.T."/>
            <person name="Allen E."/>
            <person name="Araujo R."/>
            <person name="Aviles E."/>
            <person name="Berno A."/>
            <person name="Carpenter J."/>
            <person name="Chen E."/>
            <person name="Cherry J.M."/>
            <person name="Chung E."/>
            <person name="Duncan M."/>
            <person name="Hunicke-Smith S."/>
            <person name="Hyman R.W."/>
            <person name="Komp C."/>
            <person name="Lashkari D."/>
            <person name="Lew H."/>
            <person name="Lin D."/>
            <person name="Mosedale D."/>
            <person name="Nakahara K."/>
            <person name="Namath A."/>
            <person name="Oefner P."/>
            <person name="Oh C."/>
            <person name="Petel F.X."/>
            <person name="Roberts D."/>
            <person name="Schramm S."/>
            <person name="Schroeder M."/>
            <person name="Shogren T."/>
            <person name="Shroff N."/>
            <person name="Winant A."/>
            <person name="Yelton M.A."/>
            <person name="Botstein D."/>
            <person name="Davis R.W."/>
            <person name="Johnston M."/>
            <person name="Andrews S."/>
            <person name="Brinkman R."/>
            <person name="Cooper J."/>
            <person name="Ding H."/>
            <person name="Du Z."/>
            <person name="Favello A."/>
            <person name="Fulton L."/>
            <person name="Gattung S."/>
            <person name="Greco T."/>
            <person name="Hallsworth K."/>
            <person name="Hawkins J."/>
            <person name="Hillier L.W."/>
            <person name="Jier M."/>
            <person name="Johnson D."/>
            <person name="Johnston L."/>
            <person name="Kirsten J."/>
            <person name="Kucaba T."/>
            <person name="Langston Y."/>
            <person name="Latreille P."/>
            <person name="Le T."/>
            <person name="Mardis E."/>
            <person name="Menezes S."/>
            <person name="Miller N."/>
            <person name="Nhan M."/>
            <person name="Pauley A."/>
            <person name="Peluso D."/>
            <person name="Rifkin L."/>
            <person name="Riles L."/>
            <person name="Taich A."/>
            <person name="Trevaskis E."/>
            <person name="Vignati D."/>
            <person name="Wilcox L."/>
            <person name="Wohldman P."/>
            <person name="Vaudin M."/>
            <person name="Wilson R."/>
            <person name="Waterston R."/>
            <person name="Albermann K."/>
            <person name="Hani J."/>
            <person name="Heumann K."/>
            <person name="Kleine K."/>
            <person name="Mewes H.-W."/>
            <person name="Zollner A."/>
            <person name="Zaccaria P."/>
        </authorList>
    </citation>
    <scope>NUCLEOTIDE SEQUENCE [LARGE SCALE GENOMIC DNA]</scope>
    <source>
        <strain>ATCC 204508 / S288c</strain>
    </source>
</reference>
<reference key="3">
    <citation type="journal article" date="2014" name="G3 (Bethesda)">
        <title>The reference genome sequence of Saccharomyces cerevisiae: Then and now.</title>
        <authorList>
            <person name="Engel S.R."/>
            <person name="Dietrich F.S."/>
            <person name="Fisk D.G."/>
            <person name="Binkley G."/>
            <person name="Balakrishnan R."/>
            <person name="Costanzo M.C."/>
            <person name="Dwight S.S."/>
            <person name="Hitz B.C."/>
            <person name="Karra K."/>
            <person name="Nash R.S."/>
            <person name="Weng S."/>
            <person name="Wong E.D."/>
            <person name="Lloyd P."/>
            <person name="Skrzypek M.S."/>
            <person name="Miyasato S.R."/>
            <person name="Simison M."/>
            <person name="Cherry J.M."/>
        </authorList>
    </citation>
    <scope>GENOME REANNOTATION</scope>
    <source>
        <strain>ATCC 204508 / S288c</strain>
    </source>
</reference>
<reference key="4">
    <citation type="journal article" date="1999" name="Curr. Genet.">
        <title>Cysteine uptake by Saccharomyces cerevisiae is accomplished by multiple permeases.</title>
        <authorList>
            <person name="During-Olsen L."/>
            <person name="Regenberg B."/>
            <person name="Gjermansen C."/>
            <person name="Kielland-Brandt M.C."/>
            <person name="Hansen J."/>
        </authorList>
    </citation>
    <scope>FUNCTION IN L-CYSTEINE UPTAKE</scope>
</reference>
<reference key="5">
    <citation type="journal article" date="1999" name="Curr. Genet.">
        <title>Substrate specificity and gene expression of the amino-acid permeases in Saccharomyces cerevisiae.</title>
        <authorList>
            <person name="Regenberg B."/>
            <person name="During-Olsen L."/>
            <person name="Kielland-Brandt M.C."/>
            <person name="Holmberg S."/>
        </authorList>
    </citation>
    <scope>FUNCTION</scope>
</reference>
<reference key="6">
    <citation type="journal article" date="2006" name="Proc. Natl. Acad. Sci. U.S.A.">
        <title>A global topology map of the Saccharomyces cerevisiae membrane proteome.</title>
        <authorList>
            <person name="Kim H."/>
            <person name="Melen K."/>
            <person name="Oesterberg M."/>
            <person name="von Heijne G."/>
        </authorList>
    </citation>
    <scope>TOPOLOGY [LARGE SCALE ANALYSIS]</scope>
    <source>
        <strain>ATCC 208353 / W303-1A</strain>
    </source>
</reference>
<keyword id="KW-0029">Amino-acid transport</keyword>
<keyword id="KW-0472">Membrane</keyword>
<keyword id="KW-0597">Phosphoprotein</keyword>
<keyword id="KW-1185">Reference proteome</keyword>
<keyword id="KW-0812">Transmembrane</keyword>
<keyword id="KW-1133">Transmembrane helix</keyword>
<keyword id="KW-0813">Transport</keyword>